<feature type="chain" id="PRO_0000422823" description="Centrosomal protein of 83 kDa">
    <location>
        <begin position="1"/>
        <end position="716"/>
    </location>
</feature>
<feature type="region of interest" description="Disordered" evidence="3">
    <location>
        <begin position="1"/>
        <end position="20"/>
    </location>
</feature>
<feature type="region of interest" description="Disordered" evidence="3">
    <location>
        <begin position="691"/>
        <end position="716"/>
    </location>
</feature>
<feature type="coiled-coil region" evidence="2">
    <location>
        <begin position="55"/>
        <end position="638"/>
    </location>
</feature>
<feature type="compositionally biased region" description="Basic and acidic residues" evidence="3">
    <location>
        <begin position="698"/>
        <end position="707"/>
    </location>
</feature>
<name>CEP83_DANRE</name>
<gene>
    <name type="primary">cep83</name>
    <name type="synonym">ccdc41</name>
</gene>
<proteinExistence type="inferred from homology"/>
<reference key="1">
    <citation type="journal article" date="2013" name="Nature">
        <title>The zebrafish reference genome sequence and its relationship to the human genome.</title>
        <authorList>
            <person name="Howe K."/>
            <person name="Clark M.D."/>
            <person name="Torroja C.F."/>
            <person name="Torrance J."/>
            <person name="Berthelot C."/>
            <person name="Muffato M."/>
            <person name="Collins J.E."/>
            <person name="Humphray S."/>
            <person name="McLaren K."/>
            <person name="Matthews L."/>
            <person name="McLaren S."/>
            <person name="Sealy I."/>
            <person name="Caccamo M."/>
            <person name="Churcher C."/>
            <person name="Scott C."/>
            <person name="Barrett J.C."/>
            <person name="Koch R."/>
            <person name="Rauch G.J."/>
            <person name="White S."/>
            <person name="Chow W."/>
            <person name="Kilian B."/>
            <person name="Quintais L.T."/>
            <person name="Guerra-Assuncao J.A."/>
            <person name="Zhou Y."/>
            <person name="Gu Y."/>
            <person name="Yen J."/>
            <person name="Vogel J.H."/>
            <person name="Eyre T."/>
            <person name="Redmond S."/>
            <person name="Banerjee R."/>
            <person name="Chi J."/>
            <person name="Fu B."/>
            <person name="Langley E."/>
            <person name="Maguire S.F."/>
            <person name="Laird G.K."/>
            <person name="Lloyd D."/>
            <person name="Kenyon E."/>
            <person name="Donaldson S."/>
            <person name="Sehra H."/>
            <person name="Almeida-King J."/>
            <person name="Loveland J."/>
            <person name="Trevanion S."/>
            <person name="Jones M."/>
            <person name="Quail M."/>
            <person name="Willey D."/>
            <person name="Hunt A."/>
            <person name="Burton J."/>
            <person name="Sims S."/>
            <person name="McLay K."/>
            <person name="Plumb B."/>
            <person name="Davis J."/>
            <person name="Clee C."/>
            <person name="Oliver K."/>
            <person name="Clark R."/>
            <person name="Riddle C."/>
            <person name="Elliot D."/>
            <person name="Threadgold G."/>
            <person name="Harden G."/>
            <person name="Ware D."/>
            <person name="Begum S."/>
            <person name="Mortimore B."/>
            <person name="Kerry G."/>
            <person name="Heath P."/>
            <person name="Phillimore B."/>
            <person name="Tracey A."/>
            <person name="Corby N."/>
            <person name="Dunn M."/>
            <person name="Johnson C."/>
            <person name="Wood J."/>
            <person name="Clark S."/>
            <person name="Pelan S."/>
            <person name="Griffiths G."/>
            <person name="Smith M."/>
            <person name="Glithero R."/>
            <person name="Howden P."/>
            <person name="Barker N."/>
            <person name="Lloyd C."/>
            <person name="Stevens C."/>
            <person name="Harley J."/>
            <person name="Holt K."/>
            <person name="Panagiotidis G."/>
            <person name="Lovell J."/>
            <person name="Beasley H."/>
            <person name="Henderson C."/>
            <person name="Gordon D."/>
            <person name="Auger K."/>
            <person name="Wright D."/>
            <person name="Collins J."/>
            <person name="Raisen C."/>
            <person name="Dyer L."/>
            <person name="Leung K."/>
            <person name="Robertson L."/>
            <person name="Ambridge K."/>
            <person name="Leongamornlert D."/>
            <person name="McGuire S."/>
            <person name="Gilderthorp R."/>
            <person name="Griffiths C."/>
            <person name="Manthravadi D."/>
            <person name="Nichol S."/>
            <person name="Barker G."/>
            <person name="Whitehead S."/>
            <person name="Kay M."/>
            <person name="Brown J."/>
            <person name="Murnane C."/>
            <person name="Gray E."/>
            <person name="Humphries M."/>
            <person name="Sycamore N."/>
            <person name="Barker D."/>
            <person name="Saunders D."/>
            <person name="Wallis J."/>
            <person name="Babbage A."/>
            <person name="Hammond S."/>
            <person name="Mashreghi-Mohammadi M."/>
            <person name="Barr L."/>
            <person name="Martin S."/>
            <person name="Wray P."/>
            <person name="Ellington A."/>
            <person name="Matthews N."/>
            <person name="Ellwood M."/>
            <person name="Woodmansey R."/>
            <person name="Clark G."/>
            <person name="Cooper J."/>
            <person name="Tromans A."/>
            <person name="Grafham D."/>
            <person name="Skuce C."/>
            <person name="Pandian R."/>
            <person name="Andrews R."/>
            <person name="Harrison E."/>
            <person name="Kimberley A."/>
            <person name="Garnett J."/>
            <person name="Fosker N."/>
            <person name="Hall R."/>
            <person name="Garner P."/>
            <person name="Kelly D."/>
            <person name="Bird C."/>
            <person name="Palmer S."/>
            <person name="Gehring I."/>
            <person name="Berger A."/>
            <person name="Dooley C.M."/>
            <person name="Ersan-Urun Z."/>
            <person name="Eser C."/>
            <person name="Geiger H."/>
            <person name="Geisler M."/>
            <person name="Karotki L."/>
            <person name="Kirn A."/>
            <person name="Konantz J."/>
            <person name="Konantz M."/>
            <person name="Oberlander M."/>
            <person name="Rudolph-Geiger S."/>
            <person name="Teucke M."/>
            <person name="Lanz C."/>
            <person name="Raddatz G."/>
            <person name="Osoegawa K."/>
            <person name="Zhu B."/>
            <person name="Rapp A."/>
            <person name="Widaa S."/>
            <person name="Langford C."/>
            <person name="Yang F."/>
            <person name="Schuster S.C."/>
            <person name="Carter N.P."/>
            <person name="Harrow J."/>
            <person name="Ning Z."/>
            <person name="Herrero J."/>
            <person name="Searle S.M."/>
            <person name="Enright A."/>
            <person name="Geisler R."/>
            <person name="Plasterk R.H."/>
            <person name="Lee C."/>
            <person name="Westerfield M."/>
            <person name="de Jong P.J."/>
            <person name="Zon L.I."/>
            <person name="Postlethwait J.H."/>
            <person name="Nusslein-Volhard C."/>
            <person name="Hubbard T.J."/>
            <person name="Roest Crollius H."/>
            <person name="Rogers J."/>
            <person name="Stemple D.L."/>
        </authorList>
    </citation>
    <scope>NUCLEOTIDE SEQUENCE [LARGE SCALE GENOMIC DNA]</scope>
    <source>
        <strain>Tuebingen</strain>
    </source>
</reference>
<reference key="2">
    <citation type="journal article" date="2013" name="Proc. Natl. Acad. Sci. U.S.A.">
        <title>CCDC41 is required for ciliary vesicle docking to the mother centriole.</title>
        <authorList>
            <person name="Joo K."/>
            <person name="Kim C.G."/>
            <person name="Lee M.S."/>
            <person name="Moon H.Y."/>
            <person name="Lee S.H."/>
            <person name="Kim M.J."/>
            <person name="Kweon H.S."/>
            <person name="Park W.Y."/>
            <person name="Kim C.H."/>
            <person name="Gleeson J.G."/>
            <person name="Kim J."/>
        </authorList>
    </citation>
    <scope>FUNCTION</scope>
    <scope>DISRUPTION PHENOTYPE</scope>
</reference>
<keyword id="KW-0970">Cilium biogenesis/degradation</keyword>
<keyword id="KW-0175">Coiled coil</keyword>
<keyword id="KW-0963">Cytoplasm</keyword>
<keyword id="KW-0206">Cytoskeleton</keyword>
<keyword id="KW-1185">Reference proteome</keyword>
<comment type="function">
    <text evidence="4">Component of the distal appendage region of the centriole involved in the initiation of primary cilium assembly.</text>
</comment>
<comment type="subcellular location">
    <subcellularLocation>
        <location evidence="1">Cytoplasm</location>
        <location evidence="1">Cytoskeleton</location>
        <location evidence="1">Microtubule organizing center</location>
        <location evidence="1">Centrosome</location>
        <location evidence="1">Centriole</location>
    </subcellularLocation>
    <text evidence="1">Localizes specifically to the distal appendage region of the centriole, which anchors the mother centriole to the plasma membrane. Localizes to centrioles at all stages of the cell cycle, including mitosis (By similarity).</text>
</comment>
<comment type="disruption phenotype">
    <text evidence="4">Reduction of olfactory cilia formation.</text>
</comment>
<comment type="similarity">
    <text evidence="5">Belongs to the CEP83 family.</text>
</comment>
<protein>
    <recommendedName>
        <fullName>Centrosomal protein of 83 kDa</fullName>
        <shortName>Cep83</shortName>
    </recommendedName>
    <alternativeName>
        <fullName>Coiled-coil domain-containing protein 41</fullName>
    </alternativeName>
</protein>
<sequence>MDKMNPPALGQASALFPDLEPPGGVGKATVLLGGSTGLTSSDMEFQKMLIDERMRCENHKTNYQTLKVEHTRLQDQYTRAQNELKRLLSDRQVTQEKQQLLLAELRGELLDKTRDLEELKLQVLTPQRLELLRAQVQQELEAPIRERFNKLQEEAENYRSEYNKLRYDLTFLKSEFDHQKEEHARVLEERRIRHEADVARLEHDKEDLATQLQSGDPARDGKRVEALLREKAQLHQRLRGLEAEVTELRAERNNSGAQAENVQRIQIRQLAESQAAVKALEAEKQSIRMQLDRTESELRLSQEQNTLLTGKLHKAEREINSLNSQVEEMKHTHKLELSNVKLECVRSKGELERERDMLQCQVEGLQSDIEVMKSALERNKELISEKEREMVRRVQAAREEEIHKMATLQEEKLELENRLSELEQQKALQEVTGNSQKEEWEERLRAAQLGEESVRKELQNLRTKVQQQGQQLEELETLKAENADLRQQIAELNLQVGTLSHSESELLDTNNRLRESLERVREDLRSARTQMERTQQEAERLVEERRVEWLEEKHKLQDIEAELREKYSQAKERLQRAAFAQKKRKTMTELKENKLKDKIQLLEAKIAELEIEAKHAQLSKRLRELQRRHNEFRRLLLGNQMTSSTPLAQSLLIPNESIFSNIQVSEEQHQRELCVLRRRLEELENSQQQQLEELAAPLDRDRERLSSPRDALPDLS</sequence>
<organism>
    <name type="scientific">Danio rerio</name>
    <name type="common">Zebrafish</name>
    <name type="synonym">Brachydanio rerio</name>
    <dbReference type="NCBI Taxonomy" id="7955"/>
    <lineage>
        <taxon>Eukaryota</taxon>
        <taxon>Metazoa</taxon>
        <taxon>Chordata</taxon>
        <taxon>Craniata</taxon>
        <taxon>Vertebrata</taxon>
        <taxon>Euteleostomi</taxon>
        <taxon>Actinopterygii</taxon>
        <taxon>Neopterygii</taxon>
        <taxon>Teleostei</taxon>
        <taxon>Ostariophysi</taxon>
        <taxon>Cypriniformes</taxon>
        <taxon>Danionidae</taxon>
        <taxon>Danioninae</taxon>
        <taxon>Danio</taxon>
    </lineage>
</organism>
<evidence type="ECO:0000250" key="1"/>
<evidence type="ECO:0000255" key="2"/>
<evidence type="ECO:0000256" key="3">
    <source>
        <dbReference type="SAM" id="MobiDB-lite"/>
    </source>
</evidence>
<evidence type="ECO:0000269" key="4">
    <source>
    </source>
</evidence>
<evidence type="ECO:0000305" key="5"/>
<accession>F1R4Y7</accession>
<accession>H0WF82</accession>
<dbReference type="EMBL" id="CABZ01023256">
    <property type="status" value="NOT_ANNOTATED_CDS"/>
    <property type="molecule type" value="Genomic_DNA"/>
</dbReference>
<dbReference type="EMBL" id="CU693442">
    <property type="status" value="NOT_ANNOTATED_CDS"/>
    <property type="molecule type" value="Genomic_DNA"/>
</dbReference>
<dbReference type="SMR" id="F1R4Y7"/>
<dbReference type="FunCoup" id="F1R4Y7">
    <property type="interactions" value="414"/>
</dbReference>
<dbReference type="STRING" id="7955.ENSDARP00000139309"/>
<dbReference type="PaxDb" id="7955-ENSDARP00000072564"/>
<dbReference type="eggNOG" id="ENOG502QWE2">
    <property type="taxonomic scope" value="Eukaryota"/>
</dbReference>
<dbReference type="InParanoid" id="F1R4Y7"/>
<dbReference type="TreeFam" id="TF329199"/>
<dbReference type="Proteomes" id="UP000000437">
    <property type="component" value="Unplaced"/>
</dbReference>
<dbReference type="GO" id="GO:0005814">
    <property type="term" value="C:centriole"/>
    <property type="evidence" value="ECO:0000250"/>
    <property type="project" value="UniProtKB"/>
</dbReference>
<dbReference type="GO" id="GO:0005737">
    <property type="term" value="C:cytoplasm"/>
    <property type="evidence" value="ECO:0007669"/>
    <property type="project" value="UniProtKB-KW"/>
</dbReference>
<dbReference type="GO" id="GO:0060271">
    <property type="term" value="P:cilium assembly"/>
    <property type="evidence" value="ECO:0000315"/>
    <property type="project" value="UniProtKB"/>
</dbReference>
<dbReference type="Gene3D" id="1.10.287.1490">
    <property type="match status" value="1"/>
</dbReference>
<dbReference type="InterPro" id="IPR052116">
    <property type="entry name" value="Centro_Cilium_Assembly"/>
</dbReference>
<dbReference type="PANTHER" id="PTHR23170:SF2">
    <property type="entry name" value="CENTROSOMAL PROTEIN OF 83 KDA"/>
    <property type="match status" value="1"/>
</dbReference>
<dbReference type="PANTHER" id="PTHR23170">
    <property type="entry name" value="NY-REN-58 ANTIGEN"/>
    <property type="match status" value="1"/>
</dbReference>